<accession>Q8DYJ6</accession>
<reference key="1">
    <citation type="journal article" date="2002" name="Proc. Natl. Acad. Sci. U.S.A.">
        <title>Complete genome sequence and comparative genomic analysis of an emerging human pathogen, serotype V Streptococcus agalactiae.</title>
        <authorList>
            <person name="Tettelin H."/>
            <person name="Masignani V."/>
            <person name="Cieslewicz M.J."/>
            <person name="Eisen J.A."/>
            <person name="Peterson S.N."/>
            <person name="Wessels M.R."/>
            <person name="Paulsen I.T."/>
            <person name="Nelson K.E."/>
            <person name="Margarit I."/>
            <person name="Read T.D."/>
            <person name="Madoff L.C."/>
            <person name="Wolf A.M."/>
            <person name="Beanan M.J."/>
            <person name="Brinkac L.M."/>
            <person name="Daugherty S.C."/>
            <person name="DeBoy R.T."/>
            <person name="Durkin A.S."/>
            <person name="Kolonay J.F."/>
            <person name="Madupu R."/>
            <person name="Lewis M.R."/>
            <person name="Radune D."/>
            <person name="Fedorova N.B."/>
            <person name="Scanlan D."/>
            <person name="Khouri H.M."/>
            <person name="Mulligan S."/>
            <person name="Carty H.A."/>
            <person name="Cline R.T."/>
            <person name="Van Aken S.E."/>
            <person name="Gill J."/>
            <person name="Scarselli M."/>
            <person name="Mora M."/>
            <person name="Iacobini E.T."/>
            <person name="Brettoni C."/>
            <person name="Galli G."/>
            <person name="Mariani M."/>
            <person name="Vegni F."/>
            <person name="Maione D."/>
            <person name="Rinaudo D."/>
            <person name="Rappuoli R."/>
            <person name="Telford J.L."/>
            <person name="Kasper D.L."/>
            <person name="Grandi G."/>
            <person name="Fraser C.M."/>
        </authorList>
    </citation>
    <scope>NUCLEOTIDE SEQUENCE [LARGE SCALE GENOMIC DNA]</scope>
    <source>
        <strain>ATCC BAA-611 / 2603 V/R</strain>
    </source>
</reference>
<sequence length="48" mass="5533">MRVKINLKCSSCGSKNYLTSKNKSNHPDKIEVPKYCPKERKVTLHIES</sequence>
<name>RL331_STRA5</name>
<protein>
    <recommendedName>
        <fullName evidence="1">Large ribosomal subunit protein bL33A</fullName>
    </recommendedName>
    <alternativeName>
        <fullName evidence="1">50S ribosomal protein L33 1</fullName>
    </alternativeName>
</protein>
<gene>
    <name evidence="1" type="primary">rpmG1</name>
    <name type="ordered locus">SAG1484</name>
</gene>
<organism>
    <name type="scientific">Streptococcus agalactiae serotype V (strain ATCC BAA-611 / 2603 V/R)</name>
    <dbReference type="NCBI Taxonomy" id="208435"/>
    <lineage>
        <taxon>Bacteria</taxon>
        <taxon>Bacillati</taxon>
        <taxon>Bacillota</taxon>
        <taxon>Bacilli</taxon>
        <taxon>Lactobacillales</taxon>
        <taxon>Streptococcaceae</taxon>
        <taxon>Streptococcus</taxon>
    </lineage>
</organism>
<keyword id="KW-1185">Reference proteome</keyword>
<keyword id="KW-0687">Ribonucleoprotein</keyword>
<keyword id="KW-0689">Ribosomal protein</keyword>
<dbReference type="EMBL" id="AE009948">
    <property type="protein sequence ID" value="AAN00351.1"/>
    <property type="molecule type" value="Genomic_DNA"/>
</dbReference>
<dbReference type="RefSeq" id="NP_688478.1">
    <property type="nucleotide sequence ID" value="NC_004116.1"/>
</dbReference>
<dbReference type="SMR" id="Q8DYJ6"/>
<dbReference type="STRING" id="208435.SAG1484"/>
<dbReference type="KEGG" id="sag:SAG1484"/>
<dbReference type="PATRIC" id="fig|208435.3.peg.1494"/>
<dbReference type="HOGENOM" id="CLU_190949_0_2_9"/>
<dbReference type="OrthoDB" id="197660at2"/>
<dbReference type="Proteomes" id="UP000000821">
    <property type="component" value="Chromosome"/>
</dbReference>
<dbReference type="GO" id="GO:0005737">
    <property type="term" value="C:cytoplasm"/>
    <property type="evidence" value="ECO:0007669"/>
    <property type="project" value="UniProtKB-ARBA"/>
</dbReference>
<dbReference type="GO" id="GO:1990904">
    <property type="term" value="C:ribonucleoprotein complex"/>
    <property type="evidence" value="ECO:0007669"/>
    <property type="project" value="UniProtKB-KW"/>
</dbReference>
<dbReference type="GO" id="GO:0005840">
    <property type="term" value="C:ribosome"/>
    <property type="evidence" value="ECO:0007669"/>
    <property type="project" value="UniProtKB-KW"/>
</dbReference>
<dbReference type="GO" id="GO:0003735">
    <property type="term" value="F:structural constituent of ribosome"/>
    <property type="evidence" value="ECO:0007669"/>
    <property type="project" value="InterPro"/>
</dbReference>
<dbReference type="GO" id="GO:0006412">
    <property type="term" value="P:translation"/>
    <property type="evidence" value="ECO:0007669"/>
    <property type="project" value="UniProtKB-UniRule"/>
</dbReference>
<dbReference type="Gene3D" id="2.20.28.120">
    <property type="entry name" value="Ribosomal protein L33"/>
    <property type="match status" value="1"/>
</dbReference>
<dbReference type="HAMAP" id="MF_00294">
    <property type="entry name" value="Ribosomal_bL33"/>
    <property type="match status" value="1"/>
</dbReference>
<dbReference type="InterPro" id="IPR001705">
    <property type="entry name" value="Ribosomal_bL33"/>
</dbReference>
<dbReference type="InterPro" id="IPR018264">
    <property type="entry name" value="Ribosomal_bL33_CS"/>
</dbReference>
<dbReference type="InterPro" id="IPR038584">
    <property type="entry name" value="Ribosomal_bL33_sf"/>
</dbReference>
<dbReference type="InterPro" id="IPR011332">
    <property type="entry name" value="Ribosomal_zn-bd"/>
</dbReference>
<dbReference type="NCBIfam" id="NF001764">
    <property type="entry name" value="PRK00504.1"/>
    <property type="match status" value="1"/>
</dbReference>
<dbReference type="NCBIfam" id="NF001860">
    <property type="entry name" value="PRK00595.1"/>
    <property type="match status" value="1"/>
</dbReference>
<dbReference type="NCBIfam" id="TIGR01023">
    <property type="entry name" value="rpmG_bact"/>
    <property type="match status" value="1"/>
</dbReference>
<dbReference type="PANTHER" id="PTHR43168">
    <property type="entry name" value="50S RIBOSOMAL PROTEIN L33, CHLOROPLASTIC"/>
    <property type="match status" value="1"/>
</dbReference>
<dbReference type="PANTHER" id="PTHR43168:SF6">
    <property type="entry name" value="LARGE RIBOSOMAL SUBUNIT PROTEIN BL33A"/>
    <property type="match status" value="1"/>
</dbReference>
<dbReference type="Pfam" id="PF00471">
    <property type="entry name" value="Ribosomal_L33"/>
    <property type="match status" value="1"/>
</dbReference>
<dbReference type="SUPFAM" id="SSF57829">
    <property type="entry name" value="Zn-binding ribosomal proteins"/>
    <property type="match status" value="1"/>
</dbReference>
<dbReference type="PROSITE" id="PS00582">
    <property type="entry name" value="RIBOSOMAL_L33"/>
    <property type="match status" value="1"/>
</dbReference>
<evidence type="ECO:0000255" key="1">
    <source>
        <dbReference type="HAMAP-Rule" id="MF_00294"/>
    </source>
</evidence>
<comment type="similarity">
    <text evidence="1">Belongs to the bacterial ribosomal protein bL33 family.</text>
</comment>
<feature type="chain" id="PRO_0000356706" description="Large ribosomal subunit protein bL33A">
    <location>
        <begin position="1"/>
        <end position="48"/>
    </location>
</feature>
<proteinExistence type="inferred from homology"/>